<comment type="alternative products">
    <event type="alternative splicing"/>
    <isoform>
        <id>F4KEM0-1</id>
        <name>1</name>
        <sequence type="displayed"/>
    </isoform>
    <text>A number of isoforms are produced. According to EST sequences.</text>
</comment>
<comment type="similarity">
    <text evidence="4">Belongs to the DnaX/STICHEL family.</text>
</comment>
<comment type="sequence caution" evidence="4">
    <conflict type="miscellaneous discrepancy">
        <sequence resource="EMBL-CDS" id="AAU44569"/>
    </conflict>
    <text>Sequencing errors.</text>
</comment>
<comment type="sequence caution" evidence="4">
    <conflict type="miscellaneous discrepancy">
        <sequence resource="EMBL-CDS" id="ABE66222"/>
    </conflict>
    <text>Wrong choice of frame.</text>
</comment>
<comment type="sequence caution" evidence="4">
    <conflict type="erroneous gene model prediction">
        <sequence resource="EMBL-CDS" id="BAB09214"/>
    </conflict>
</comment>
<gene>
    <name type="ordered locus">At5g45720</name>
    <name type="ORF">MRA19.13</name>
</gene>
<dbReference type="EMBL" id="AB012245">
    <property type="protein sequence ID" value="BAB09214.1"/>
    <property type="status" value="ALT_SEQ"/>
    <property type="molecule type" value="Genomic_DNA"/>
</dbReference>
<dbReference type="EMBL" id="CP002688">
    <property type="protein sequence ID" value="AED95288.1"/>
    <property type="molecule type" value="Genomic_DNA"/>
</dbReference>
<dbReference type="EMBL" id="AY735699">
    <property type="protein sequence ID" value="AAU44569.1"/>
    <property type="status" value="ALT_SEQ"/>
    <property type="molecule type" value="mRNA"/>
</dbReference>
<dbReference type="EMBL" id="DQ447040">
    <property type="protein sequence ID" value="ABE66222.1"/>
    <property type="status" value="ALT_SEQ"/>
    <property type="molecule type" value="mRNA"/>
</dbReference>
<dbReference type="RefSeq" id="NP_199384.2">
    <molecule id="F4KEM0-1"/>
    <property type="nucleotide sequence ID" value="NM_123939.3"/>
</dbReference>
<dbReference type="SMR" id="F4KEM0"/>
<dbReference type="FunCoup" id="F4KEM0">
    <property type="interactions" value="2"/>
</dbReference>
<dbReference type="STRING" id="3702.F4KEM0"/>
<dbReference type="iPTMnet" id="F4KEM0"/>
<dbReference type="PaxDb" id="3702-AT5G45720.1"/>
<dbReference type="EnsemblPlants" id="AT5G45720.1">
    <molecule id="F4KEM0-1"/>
    <property type="protein sequence ID" value="AT5G45720.1"/>
    <property type="gene ID" value="AT5G45720"/>
</dbReference>
<dbReference type="GeneID" id="834611"/>
<dbReference type="Gramene" id="AT5G45720.1">
    <molecule id="F4KEM0-1"/>
    <property type="protein sequence ID" value="AT5G45720.1"/>
    <property type="gene ID" value="AT5G45720"/>
</dbReference>
<dbReference type="KEGG" id="ath:AT5G45720"/>
<dbReference type="Araport" id="AT5G45720"/>
<dbReference type="TAIR" id="AT5G45720"/>
<dbReference type="eggNOG" id="KOG0989">
    <property type="taxonomic scope" value="Eukaryota"/>
</dbReference>
<dbReference type="InParanoid" id="F4KEM0"/>
<dbReference type="OMA" id="WEEESLT"/>
<dbReference type="PRO" id="PR:F4KEM0"/>
<dbReference type="Proteomes" id="UP000006548">
    <property type="component" value="Chromosome 5"/>
</dbReference>
<dbReference type="ExpressionAtlas" id="F4KEM0">
    <property type="expression patterns" value="baseline and differential"/>
</dbReference>
<dbReference type="GO" id="GO:0009360">
    <property type="term" value="C:DNA polymerase III complex"/>
    <property type="evidence" value="ECO:0007669"/>
    <property type="project" value="InterPro"/>
</dbReference>
<dbReference type="GO" id="GO:0005524">
    <property type="term" value="F:ATP binding"/>
    <property type="evidence" value="ECO:0007669"/>
    <property type="project" value="UniProtKB-KW"/>
</dbReference>
<dbReference type="GO" id="GO:0016887">
    <property type="term" value="F:ATP hydrolysis activity"/>
    <property type="evidence" value="ECO:0007669"/>
    <property type="project" value="InterPro"/>
</dbReference>
<dbReference type="GO" id="GO:0003677">
    <property type="term" value="F:DNA binding"/>
    <property type="evidence" value="ECO:0007669"/>
    <property type="project" value="InterPro"/>
</dbReference>
<dbReference type="GO" id="GO:0003887">
    <property type="term" value="F:DNA-directed DNA polymerase activity"/>
    <property type="evidence" value="ECO:0007669"/>
    <property type="project" value="InterPro"/>
</dbReference>
<dbReference type="GO" id="GO:0046872">
    <property type="term" value="F:metal ion binding"/>
    <property type="evidence" value="ECO:0007669"/>
    <property type="project" value="UniProtKB-KW"/>
</dbReference>
<dbReference type="GO" id="GO:0006260">
    <property type="term" value="P:DNA replication"/>
    <property type="evidence" value="ECO:0007669"/>
    <property type="project" value="InterPro"/>
</dbReference>
<dbReference type="CDD" id="cd18137">
    <property type="entry name" value="HLD_clamp_pol_III_gamma_tau"/>
    <property type="match status" value="1"/>
</dbReference>
<dbReference type="FunFam" id="1.10.8.60:FF:000013">
    <property type="entry name" value="DNA polymerase III subunit gamma/tau"/>
    <property type="match status" value="1"/>
</dbReference>
<dbReference type="Gene3D" id="1.10.8.60">
    <property type="match status" value="1"/>
</dbReference>
<dbReference type="Gene3D" id="3.40.50.300">
    <property type="entry name" value="P-loop containing nucleotide triphosphate hydrolases"/>
    <property type="match status" value="1"/>
</dbReference>
<dbReference type="InterPro" id="IPR003593">
    <property type="entry name" value="AAA+_ATPase"/>
</dbReference>
<dbReference type="InterPro" id="IPR008921">
    <property type="entry name" value="DNA_pol3_clamp-load_cplx_C"/>
</dbReference>
<dbReference type="InterPro" id="IPR022754">
    <property type="entry name" value="DNA_pol_III_gamma-3"/>
</dbReference>
<dbReference type="InterPro" id="IPR012763">
    <property type="entry name" value="DNA_pol_III_sug/sutau_N"/>
</dbReference>
<dbReference type="InterPro" id="IPR050238">
    <property type="entry name" value="DNA_Rep/Repair_Clamp_Loader"/>
</dbReference>
<dbReference type="InterPro" id="IPR054506">
    <property type="entry name" value="DnaA_N-like_STI"/>
</dbReference>
<dbReference type="InterPro" id="IPR045085">
    <property type="entry name" value="HLD_clamp_pol_III_gamma_tau"/>
</dbReference>
<dbReference type="InterPro" id="IPR027417">
    <property type="entry name" value="P-loop_NTPase"/>
</dbReference>
<dbReference type="NCBIfam" id="TIGR02397">
    <property type="entry name" value="dnaX_nterm"/>
    <property type="match status" value="1"/>
</dbReference>
<dbReference type="PANTHER" id="PTHR11669:SF57">
    <property type="entry name" value="PROTEIN STICHEL-LIKE 4"/>
    <property type="match status" value="1"/>
</dbReference>
<dbReference type="PANTHER" id="PTHR11669">
    <property type="entry name" value="REPLICATION FACTOR C / DNA POLYMERASE III GAMMA-TAU SUBUNIT"/>
    <property type="match status" value="1"/>
</dbReference>
<dbReference type="Pfam" id="PF13177">
    <property type="entry name" value="DNA_pol3_delta2"/>
    <property type="match status" value="1"/>
</dbReference>
<dbReference type="Pfam" id="PF12169">
    <property type="entry name" value="DNA_pol3_gamma3"/>
    <property type="match status" value="1"/>
</dbReference>
<dbReference type="Pfam" id="PF23007">
    <property type="entry name" value="DnaA_N-like_STI"/>
    <property type="match status" value="1"/>
</dbReference>
<dbReference type="SMART" id="SM00382">
    <property type="entry name" value="AAA"/>
    <property type="match status" value="1"/>
</dbReference>
<dbReference type="SUPFAM" id="SSF52540">
    <property type="entry name" value="P-loop containing nucleoside triphosphate hydrolases"/>
    <property type="match status" value="1"/>
</dbReference>
<dbReference type="SUPFAM" id="SSF48019">
    <property type="entry name" value="post-AAA+ oligomerization domain-like"/>
    <property type="match status" value="1"/>
</dbReference>
<feature type="chain" id="PRO_0000422980" description="Protein STICHEL-like 4">
    <location>
        <begin position="1"/>
        <end position="966"/>
    </location>
</feature>
<feature type="region of interest" description="Disordered" evidence="3">
    <location>
        <begin position="64"/>
        <end position="118"/>
    </location>
</feature>
<feature type="region of interest" description="Disordered" evidence="3">
    <location>
        <begin position="200"/>
        <end position="237"/>
    </location>
</feature>
<feature type="region of interest" description="Disordered" evidence="3">
    <location>
        <begin position="706"/>
        <end position="733"/>
    </location>
</feature>
<feature type="coiled-coil region" evidence="2">
    <location>
        <begin position="650"/>
        <end position="678"/>
    </location>
</feature>
<feature type="compositionally biased region" description="Basic and acidic residues" evidence="3">
    <location>
        <begin position="75"/>
        <end position="84"/>
    </location>
</feature>
<feature type="compositionally biased region" description="Polar residues" evidence="3">
    <location>
        <begin position="98"/>
        <end position="108"/>
    </location>
</feature>
<feature type="compositionally biased region" description="Basic and acidic residues" evidence="3">
    <location>
        <begin position="109"/>
        <end position="118"/>
    </location>
</feature>
<feature type="compositionally biased region" description="Polar residues" evidence="3">
    <location>
        <begin position="208"/>
        <end position="217"/>
    </location>
</feature>
<feature type="compositionally biased region" description="Basic and acidic residues" evidence="3">
    <location>
        <begin position="219"/>
        <end position="236"/>
    </location>
</feature>
<feature type="compositionally biased region" description="Polar residues" evidence="3">
    <location>
        <begin position="706"/>
        <end position="717"/>
    </location>
</feature>
<feature type="binding site" evidence="2">
    <location>
        <begin position="384"/>
        <end position="391"/>
    </location>
    <ligand>
        <name>ATP</name>
        <dbReference type="ChEBI" id="CHEBI:30616"/>
    </ligand>
</feature>
<feature type="binding site" evidence="1">
    <location>
        <position position="403"/>
    </location>
    <ligand>
        <name>Zn(2+)</name>
        <dbReference type="ChEBI" id="CHEBI:29105"/>
    </ligand>
</feature>
<feature type="binding site" evidence="1">
    <location>
        <position position="412"/>
    </location>
    <ligand>
        <name>Zn(2+)</name>
        <dbReference type="ChEBI" id="CHEBI:29105"/>
    </ligand>
</feature>
<feature type="binding site" evidence="1">
    <location>
        <position position="415"/>
    </location>
    <ligand>
        <name>Zn(2+)</name>
        <dbReference type="ChEBI" id="CHEBI:29105"/>
    </ligand>
</feature>
<feature type="binding site" evidence="1">
    <location>
        <position position="418"/>
    </location>
    <ligand>
        <name>Zn(2+)</name>
        <dbReference type="ChEBI" id="CHEBI:29105"/>
    </ligand>
</feature>
<feature type="sequence conflict" description="In Ref. 4; ABE66222." evidence="4" ref="4">
    <original>S</original>
    <variation>F</variation>
    <location>
        <position position="6"/>
    </location>
</feature>
<protein>
    <recommendedName>
        <fullName>Protein STICHEL-like 4</fullName>
    </recommendedName>
</protein>
<accession>F4KEM0</accession>
<accession>Q1PDM8</accession>
<accession>Q5XV23</accession>
<accession>Q9FK71</accession>
<sequence>MSRVASSRVLKDSNGDIGEHLRNHIHLTNCIHLKNHMHNNNKQSPVLTDRSLLMRDLVVLQRSRSLRDPSASPNLKEDHQDSREGRRRSGLRLSGSSPIVSFGTSKVTPSDEKFDRSSRKSYRVEEVNEVYSVPSVKSVSKDRINKKVNEAIVKTLSDQLNEVGGDSDDLVSCNVRPRGDGCRRRKFRGTRRAGRAVNVRDNAAGNESEMSIASNSVPRGEKYEGEEGGGGRDREQNMSCGIPFNWSRIHHRGKTFLDIAGRSLSCGISDSKGRKGEAGTPMFSDSSSSDREALPLLVDSADNEEWVHDYSGELGIFADNLLKNGKDSVIGKKSSRKNTRWHQSFTQKYAPRTFRDLLGQNLVVQALSNAIAKRRVGLLYVFHGPNGTGKTSCARVFARALNCHSTEQSKPCGVCSSCVSYDDGKNRYIREMGPVKSFDFENLLDKTNIRQQQKQQLVLIFDDCDTMSTDCWNTLSKIVDRAPRRVVFVLVCSSLDVLPHIIVSRCQKFFFPKLKDVDIIDSLQLIASKEEIDIDKDALKLVASRSDGSLRDAEMTLEQLSLLGTRISVPLVQEMVGLISDEKLVDLLDLALSADTVNTVKNLRIIMETGLEPLALMSQLATVITDILAGSYDFTKDQCKRKFFRRQPLSKEDMEKLKQALKTLSESEKQLRVSNDKLTWLTAALLQLAPDKQYLLPHSSSADASFNHTPLTDSDPSNHVVAGTRRDDSKQGFSCKNRPSVEDIWLAVIENVRVNGLREFLYKEGKIFSISIGSAPMVQLMFNSPIAKSTAENFEEHILKAFEAVLGSPVTLEMRTESKKDLGFSSLQGLSNGERFRESGRSEIVEVADSESPMTRVRRKHLEASQNQNQNQNQSIVRGKVSLAQVIKQAEGNSWSKHKAVEIANKLEQENLKLEPRSRSLICWKASRSTRRKLSRLKVRTRKLRLHSLLKLVSCGKCLSTRSPPR</sequence>
<organism>
    <name type="scientific">Arabidopsis thaliana</name>
    <name type="common">Mouse-ear cress</name>
    <dbReference type="NCBI Taxonomy" id="3702"/>
    <lineage>
        <taxon>Eukaryota</taxon>
        <taxon>Viridiplantae</taxon>
        <taxon>Streptophyta</taxon>
        <taxon>Embryophyta</taxon>
        <taxon>Tracheophyta</taxon>
        <taxon>Spermatophyta</taxon>
        <taxon>Magnoliopsida</taxon>
        <taxon>eudicotyledons</taxon>
        <taxon>Gunneridae</taxon>
        <taxon>Pentapetalae</taxon>
        <taxon>rosids</taxon>
        <taxon>malvids</taxon>
        <taxon>Brassicales</taxon>
        <taxon>Brassicaceae</taxon>
        <taxon>Camelineae</taxon>
        <taxon>Arabidopsis</taxon>
    </lineage>
</organism>
<keyword id="KW-0025">Alternative splicing</keyword>
<keyword id="KW-0067">ATP-binding</keyword>
<keyword id="KW-0175">Coiled coil</keyword>
<keyword id="KW-0479">Metal-binding</keyword>
<keyword id="KW-0547">Nucleotide-binding</keyword>
<keyword id="KW-1185">Reference proteome</keyword>
<keyword id="KW-0862">Zinc</keyword>
<reference key="1">
    <citation type="journal article" date="1998" name="DNA Res.">
        <title>Structural analysis of Arabidopsis thaliana chromosome 5. VI. Sequence features of the regions of 1,367,185 bp covered by 19 physically assigned P1 and TAC clones.</title>
        <authorList>
            <person name="Kotani H."/>
            <person name="Nakamura Y."/>
            <person name="Sato S."/>
            <person name="Asamizu E."/>
            <person name="Kaneko T."/>
            <person name="Miyajima N."/>
            <person name="Tabata S."/>
        </authorList>
    </citation>
    <scope>NUCLEOTIDE SEQUENCE [LARGE SCALE GENOMIC DNA]</scope>
    <source>
        <strain>cv. Columbia</strain>
    </source>
</reference>
<reference key="2">
    <citation type="journal article" date="2017" name="Plant J.">
        <title>Araport11: a complete reannotation of the Arabidopsis thaliana reference genome.</title>
        <authorList>
            <person name="Cheng C.Y."/>
            <person name="Krishnakumar V."/>
            <person name="Chan A.P."/>
            <person name="Thibaud-Nissen F."/>
            <person name="Schobel S."/>
            <person name="Town C.D."/>
        </authorList>
    </citation>
    <scope>GENOME REANNOTATION</scope>
    <source>
        <strain>cv. Columbia</strain>
    </source>
</reference>
<reference key="3">
    <citation type="submission" date="2004-08" db="EMBL/GenBank/DDBJ databases">
        <title>Reconstruction of cDNA sequences for hypothetical genes in Arabidopsis thaliana from 5' and 3' RACE products.</title>
        <authorList>
            <person name="Xiao Y.-L."/>
            <person name="Underwood B.A."/>
            <person name="Moskal W.A. Jr."/>
            <person name="Wang W."/>
            <person name="Redman J.C."/>
            <person name="Wu H.C."/>
            <person name="Utterback T."/>
            <person name="Town C.D."/>
        </authorList>
    </citation>
    <scope>NUCLEOTIDE SEQUENCE [LARGE SCALE MRNA]</scope>
    <source>
        <strain>cv. Columbia</strain>
    </source>
</reference>
<reference key="4">
    <citation type="journal article" date="2006" name="Plant Biotechnol. J.">
        <title>Simultaneous high-throughput recombinational cloning of open reading frames in closed and open configurations.</title>
        <authorList>
            <person name="Underwood B.A."/>
            <person name="Vanderhaeghen R."/>
            <person name="Whitford R."/>
            <person name="Town C.D."/>
            <person name="Hilson P."/>
        </authorList>
    </citation>
    <scope>NUCLEOTIDE SEQUENCE [LARGE SCALE MRNA] OF 1-539</scope>
    <source>
        <strain>cv. Columbia</strain>
    </source>
</reference>
<reference key="5">
    <citation type="journal article" date="2003" name="Plant Physiol.">
        <title>The Arabidopsis STICHEL gene is a regulator of trichome branch number and encodes a novel protein.</title>
        <authorList>
            <person name="Ilgenfritz H."/>
            <person name="Bouyer D."/>
            <person name="Schnittger A."/>
            <person name="Mathur J."/>
            <person name="Kirik V."/>
            <person name="Schwab B."/>
            <person name="Chua N.H."/>
            <person name="Juergens G."/>
            <person name="Huelskamp M."/>
        </authorList>
    </citation>
    <scope>GENE FAMILY</scope>
</reference>
<evidence type="ECO:0000250" key="1">
    <source>
        <dbReference type="UniProtKB" id="P06710"/>
    </source>
</evidence>
<evidence type="ECO:0000255" key="2"/>
<evidence type="ECO:0000256" key="3">
    <source>
        <dbReference type="SAM" id="MobiDB-lite"/>
    </source>
</evidence>
<evidence type="ECO:0000305" key="4"/>
<proteinExistence type="evidence at transcript level"/>
<name>STIL4_ARATH</name>